<comment type="function">
    <text evidence="2">Component of the ubiquinol-cytochrome c reductase complex (complex III or cytochrome b-c1 complex) that is part of the mitochondrial respiratory chain. The b-c1 complex mediates electron transfer from ubiquinol to cytochrome c. Contributes to the generation of a proton gradient across the mitochondrial membrane that is then used for ATP synthesis.</text>
</comment>
<comment type="cofactor">
    <cofactor evidence="2">
        <name>heme b</name>
        <dbReference type="ChEBI" id="CHEBI:60344"/>
    </cofactor>
    <text evidence="2">Binds 2 heme b groups non-covalently.</text>
</comment>
<comment type="subunit">
    <text evidence="2">The cytochrome bc1 complex contains 11 subunits: 3 respiratory subunits (MT-CYB, CYC1 and UQCRFS1), 2 core proteins (UQCRC1 and UQCRC2) and 6 low-molecular weight proteins (UQCRH/QCR6, UQCRB/QCR7, UQCRQ/QCR8, UQCR10/QCR9, UQCR11/QCR10 and a cleavage product of UQCRFS1). This cytochrome bc1 complex then forms a dimer.</text>
</comment>
<comment type="subcellular location">
    <subcellularLocation>
        <location evidence="2">Mitochondrion inner membrane</location>
        <topology evidence="2">Multi-pass membrane protein</topology>
    </subcellularLocation>
</comment>
<comment type="miscellaneous">
    <text evidence="1">Heme 1 (or BL or b562) is low-potential and absorbs at about 562 nm, and heme 2 (or BH or b566) is high-potential and absorbs at about 566 nm.</text>
</comment>
<comment type="similarity">
    <text evidence="3 4">Belongs to the cytochrome b family.</text>
</comment>
<comment type="caution">
    <text evidence="2">The full-length protein contains only eight transmembrane helices, not nine as predicted by bioinformatics tools.</text>
</comment>
<accession>Q956Z2</accession>
<evidence type="ECO:0000250" key="1"/>
<evidence type="ECO:0000250" key="2">
    <source>
        <dbReference type="UniProtKB" id="P00157"/>
    </source>
</evidence>
<evidence type="ECO:0000255" key="3">
    <source>
        <dbReference type="PROSITE-ProRule" id="PRU00967"/>
    </source>
</evidence>
<evidence type="ECO:0000255" key="4">
    <source>
        <dbReference type="PROSITE-ProRule" id="PRU00968"/>
    </source>
</evidence>
<name>CYB_MYOVE</name>
<dbReference type="EMBL" id="AF376870">
    <property type="protein sequence ID" value="AAK57689.1"/>
    <property type="molecule type" value="Genomic_DNA"/>
</dbReference>
<dbReference type="GO" id="GO:0005743">
    <property type="term" value="C:mitochondrial inner membrane"/>
    <property type="evidence" value="ECO:0007669"/>
    <property type="project" value="UniProtKB-SubCell"/>
</dbReference>
<dbReference type="GO" id="GO:0045275">
    <property type="term" value="C:respiratory chain complex III"/>
    <property type="evidence" value="ECO:0007669"/>
    <property type="project" value="InterPro"/>
</dbReference>
<dbReference type="GO" id="GO:0046872">
    <property type="term" value="F:metal ion binding"/>
    <property type="evidence" value="ECO:0007669"/>
    <property type="project" value="UniProtKB-KW"/>
</dbReference>
<dbReference type="GO" id="GO:0008121">
    <property type="term" value="F:ubiquinol-cytochrome-c reductase activity"/>
    <property type="evidence" value="ECO:0007669"/>
    <property type="project" value="InterPro"/>
</dbReference>
<dbReference type="GO" id="GO:0006122">
    <property type="term" value="P:mitochondrial electron transport, ubiquinol to cytochrome c"/>
    <property type="evidence" value="ECO:0007669"/>
    <property type="project" value="TreeGrafter"/>
</dbReference>
<dbReference type="CDD" id="cd00290">
    <property type="entry name" value="cytochrome_b_C"/>
    <property type="match status" value="1"/>
</dbReference>
<dbReference type="CDD" id="cd00284">
    <property type="entry name" value="Cytochrome_b_N"/>
    <property type="match status" value="1"/>
</dbReference>
<dbReference type="FunFam" id="1.20.810.10:FF:000002">
    <property type="entry name" value="Cytochrome b"/>
    <property type="match status" value="1"/>
</dbReference>
<dbReference type="Gene3D" id="1.20.810.10">
    <property type="entry name" value="Cytochrome Bc1 Complex, Chain C"/>
    <property type="match status" value="1"/>
</dbReference>
<dbReference type="InterPro" id="IPR005798">
    <property type="entry name" value="Cyt_b/b6_C"/>
</dbReference>
<dbReference type="InterPro" id="IPR036150">
    <property type="entry name" value="Cyt_b/b6_C_sf"/>
</dbReference>
<dbReference type="InterPro" id="IPR005797">
    <property type="entry name" value="Cyt_b/b6_N"/>
</dbReference>
<dbReference type="InterPro" id="IPR027387">
    <property type="entry name" value="Cytb/b6-like_sf"/>
</dbReference>
<dbReference type="InterPro" id="IPR030689">
    <property type="entry name" value="Cytochrome_b"/>
</dbReference>
<dbReference type="InterPro" id="IPR048260">
    <property type="entry name" value="Cytochrome_b_C_euk/bac"/>
</dbReference>
<dbReference type="InterPro" id="IPR048259">
    <property type="entry name" value="Cytochrome_b_N_euk/bac"/>
</dbReference>
<dbReference type="InterPro" id="IPR016174">
    <property type="entry name" value="Di-haem_cyt_TM"/>
</dbReference>
<dbReference type="PANTHER" id="PTHR19271">
    <property type="entry name" value="CYTOCHROME B"/>
    <property type="match status" value="1"/>
</dbReference>
<dbReference type="PANTHER" id="PTHR19271:SF16">
    <property type="entry name" value="CYTOCHROME B"/>
    <property type="match status" value="1"/>
</dbReference>
<dbReference type="Pfam" id="PF00032">
    <property type="entry name" value="Cytochrom_B_C"/>
    <property type="match status" value="1"/>
</dbReference>
<dbReference type="Pfam" id="PF00033">
    <property type="entry name" value="Cytochrome_B"/>
    <property type="match status" value="1"/>
</dbReference>
<dbReference type="PIRSF" id="PIRSF038885">
    <property type="entry name" value="COB"/>
    <property type="match status" value="1"/>
</dbReference>
<dbReference type="SUPFAM" id="SSF81648">
    <property type="entry name" value="a domain/subunit of cytochrome bc1 complex (Ubiquinol-cytochrome c reductase)"/>
    <property type="match status" value="1"/>
</dbReference>
<dbReference type="SUPFAM" id="SSF81342">
    <property type="entry name" value="Transmembrane di-heme cytochromes"/>
    <property type="match status" value="1"/>
</dbReference>
<dbReference type="PROSITE" id="PS51003">
    <property type="entry name" value="CYTB_CTER"/>
    <property type="match status" value="1"/>
</dbReference>
<dbReference type="PROSITE" id="PS51002">
    <property type="entry name" value="CYTB_NTER"/>
    <property type="match status" value="1"/>
</dbReference>
<gene>
    <name type="primary">MT-CYB</name>
    <name type="synonym">COB</name>
    <name type="synonym">CYTB</name>
    <name type="synonym">MTCYB</name>
</gene>
<reference key="1">
    <citation type="journal article" date="2001" name="Mol. Phylogenet. Evol.">
        <title>Molecular systematics of bats of the genus Myotis (Vespertilionidae) suggests deterministic ecomorphological convergences.</title>
        <authorList>
            <person name="Ruedi M."/>
            <person name="Mayer F."/>
        </authorList>
    </citation>
    <scope>NUCLEOTIDE SEQUENCE [GENOMIC DNA]</scope>
    <source>
        <strain>Isolate MVZ 146766</strain>
    </source>
</reference>
<proteinExistence type="inferred from homology"/>
<sequence length="379" mass="42601">MTNIRKSHPLVKIINSSFIDLPAPSNISSWWNFGSLLGICLALQILTGLFLAMHYTSDTATAFNSVTHICRDVNYGWVLRYLHANGASMFFICLYLHVGRGLYYGSYMYTETWNIGVILLFAVMATAFMGYVLPWGQMSFWGATVITNLLSAIPYIGTNLVEWIWGGFSVDKATLTRFFAFHFLLPFIIAAMVMVHLLFLHETGSNNPTGIPANADMIPFHPYYTIKDILGLLLMITALLTLVLFSPDXLGDPDNYTPANPLSTPPHIKPEWYFLFAYAILRSIPNKLGGVLALVLSILILVIVPLLHTSKQRSMTFRPLSQCLFWLLTADLFTLTWIGGQPVEHPYVIIGQLASILYFSIIIILMPLASLMENHLLKW</sequence>
<keyword id="KW-0249">Electron transport</keyword>
<keyword id="KW-0349">Heme</keyword>
<keyword id="KW-0408">Iron</keyword>
<keyword id="KW-0472">Membrane</keyword>
<keyword id="KW-0479">Metal-binding</keyword>
<keyword id="KW-0496">Mitochondrion</keyword>
<keyword id="KW-0999">Mitochondrion inner membrane</keyword>
<keyword id="KW-0679">Respiratory chain</keyword>
<keyword id="KW-0812">Transmembrane</keyword>
<keyword id="KW-1133">Transmembrane helix</keyword>
<keyword id="KW-0813">Transport</keyword>
<keyword id="KW-0830">Ubiquinone</keyword>
<geneLocation type="mitochondrion"/>
<protein>
    <recommendedName>
        <fullName>Cytochrome b</fullName>
    </recommendedName>
    <alternativeName>
        <fullName>Complex III subunit 3</fullName>
    </alternativeName>
    <alternativeName>
        <fullName>Complex III subunit III</fullName>
    </alternativeName>
    <alternativeName>
        <fullName>Cytochrome b-c1 complex subunit 3</fullName>
    </alternativeName>
    <alternativeName>
        <fullName>Ubiquinol-cytochrome-c reductase complex cytochrome b subunit</fullName>
    </alternativeName>
</protein>
<feature type="chain" id="PRO_0000254830" description="Cytochrome b">
    <location>
        <begin position="1"/>
        <end position="379"/>
    </location>
</feature>
<feature type="transmembrane region" description="Helical" evidence="2">
    <location>
        <begin position="33"/>
        <end position="53"/>
    </location>
</feature>
<feature type="transmembrane region" description="Helical" evidence="2">
    <location>
        <begin position="77"/>
        <end position="98"/>
    </location>
</feature>
<feature type="transmembrane region" description="Helical" evidence="2">
    <location>
        <begin position="113"/>
        <end position="133"/>
    </location>
</feature>
<feature type="transmembrane region" description="Helical" evidence="2">
    <location>
        <begin position="178"/>
        <end position="198"/>
    </location>
</feature>
<feature type="transmembrane region" description="Helical" evidence="2">
    <location>
        <begin position="226"/>
        <end position="246"/>
    </location>
</feature>
<feature type="transmembrane region" description="Helical" evidence="2">
    <location>
        <begin position="288"/>
        <end position="308"/>
    </location>
</feature>
<feature type="transmembrane region" description="Helical" evidence="2">
    <location>
        <begin position="320"/>
        <end position="340"/>
    </location>
</feature>
<feature type="transmembrane region" description="Helical" evidence="2">
    <location>
        <begin position="347"/>
        <end position="367"/>
    </location>
</feature>
<feature type="binding site" description="axial binding residue" evidence="2">
    <location>
        <position position="83"/>
    </location>
    <ligand>
        <name>heme b</name>
        <dbReference type="ChEBI" id="CHEBI:60344"/>
        <label>b562</label>
    </ligand>
    <ligandPart>
        <name>Fe</name>
        <dbReference type="ChEBI" id="CHEBI:18248"/>
    </ligandPart>
</feature>
<feature type="binding site" description="axial binding residue" evidence="2">
    <location>
        <position position="97"/>
    </location>
    <ligand>
        <name>heme b</name>
        <dbReference type="ChEBI" id="CHEBI:60344"/>
        <label>b566</label>
    </ligand>
    <ligandPart>
        <name>Fe</name>
        <dbReference type="ChEBI" id="CHEBI:18248"/>
    </ligandPart>
</feature>
<feature type="binding site" description="axial binding residue" evidence="2">
    <location>
        <position position="182"/>
    </location>
    <ligand>
        <name>heme b</name>
        <dbReference type="ChEBI" id="CHEBI:60344"/>
        <label>b562</label>
    </ligand>
    <ligandPart>
        <name>Fe</name>
        <dbReference type="ChEBI" id="CHEBI:18248"/>
    </ligandPart>
</feature>
<feature type="binding site" description="axial binding residue" evidence="2">
    <location>
        <position position="196"/>
    </location>
    <ligand>
        <name>heme b</name>
        <dbReference type="ChEBI" id="CHEBI:60344"/>
        <label>b566</label>
    </ligand>
    <ligandPart>
        <name>Fe</name>
        <dbReference type="ChEBI" id="CHEBI:18248"/>
    </ligandPart>
</feature>
<feature type="binding site" evidence="2">
    <location>
        <position position="201"/>
    </location>
    <ligand>
        <name>a ubiquinone</name>
        <dbReference type="ChEBI" id="CHEBI:16389"/>
    </ligand>
</feature>
<organism>
    <name type="scientific">Myotis velifer</name>
    <name type="common">Mouse-eared bat</name>
    <name type="synonym">Cave bat</name>
    <dbReference type="NCBI Taxonomy" id="9435"/>
    <lineage>
        <taxon>Eukaryota</taxon>
        <taxon>Metazoa</taxon>
        <taxon>Chordata</taxon>
        <taxon>Craniata</taxon>
        <taxon>Vertebrata</taxon>
        <taxon>Euteleostomi</taxon>
        <taxon>Mammalia</taxon>
        <taxon>Eutheria</taxon>
        <taxon>Laurasiatheria</taxon>
        <taxon>Chiroptera</taxon>
        <taxon>Yangochiroptera</taxon>
        <taxon>Vespertilionidae</taxon>
        <taxon>Myotis</taxon>
    </lineage>
</organism>